<accession>O32268</accession>
<keyword id="KW-0961">Cell wall biogenesis/degradation</keyword>
<keyword id="KW-0328">Glycosyltransferase</keyword>
<keyword id="KW-1185">Reference proteome</keyword>
<keyword id="KW-0346">Stress response</keyword>
<keyword id="KW-0808">Transferase</keyword>
<organism>
    <name type="scientific">Bacillus subtilis (strain 168)</name>
    <dbReference type="NCBI Taxonomy" id="224308"/>
    <lineage>
        <taxon>Bacteria</taxon>
        <taxon>Bacillati</taxon>
        <taxon>Bacillota</taxon>
        <taxon>Bacilli</taxon>
        <taxon>Bacillales</taxon>
        <taxon>Bacillaceae</taxon>
        <taxon>Bacillus</taxon>
    </lineage>
</organism>
<evidence type="ECO:0000305" key="1"/>
<comment type="pathway">
    <text>Cell wall biogenesis; teichuronic acid biosynthesis.</text>
</comment>
<comment type="induction">
    <text>By phosphate starvation, via the PhoP/PhoR two-component regulatory system.</text>
</comment>
<comment type="miscellaneous">
    <text>The nature of the anionic polymer present in the cell wall of B.subtilis depends on phosphate availability. Under phosphate-replete growth conditions teichoic acids are present, whereas under phosphate-depleted conditions, at least part of the wall teichoic acid is replaced with teichuronic acid, a non-phosphate containing anionic polymer. The synthesis of teichuronic acid is accompanied by degradation of teichoic acid and reutilization of liberated phosphate for other cellular processes such as nucleic acid synthesis.</text>
</comment>
<comment type="similarity">
    <text evidence="1">Belongs to the glycosyltransferase 2 family.</text>
</comment>
<name>TUAG_BACSU</name>
<sequence>MTNWKPLVSVITPSYNARDYIEDTVHSVLDQSHPHWEMIIVDDCSTDGTRDILQQYEKIDERIHVVYLEENSGAAVARNKALERAQGRYVAFLDSDDKWKKDKLEKQLEFMMERSCAFSFTGYSLMAQDGTPLDKFIHAPESLTYDDALKNTIIGCLTVMIDREQTGQIQMPNIRTRQDLATWLSLLKKGFTAYGMNECLAEYRLVNNSISSNKWKAAKKTWFVYREIERLHFMKATWCFVQYAKNAVKKRL</sequence>
<protein>
    <recommendedName>
        <fullName>Putative teichuronic acid biosynthesis glycosyltransferase TuaG</fullName>
        <ecNumber>2.4.-.-</ecNumber>
    </recommendedName>
</protein>
<reference key="1">
    <citation type="journal article" date="1999" name="Mol. Microbiol.">
        <title>Teichuronic acid operon of Bacillus subtilis 168.</title>
        <authorList>
            <person name="Soldo B."/>
            <person name="Lazarevic V."/>
            <person name="Pagni M."/>
            <person name="Karamata D."/>
        </authorList>
    </citation>
    <scope>NUCLEOTIDE SEQUENCE [GENOMIC DNA]</scope>
    <source>
        <strain>168</strain>
    </source>
</reference>
<reference key="2">
    <citation type="journal article" date="1997" name="Nature">
        <title>The complete genome sequence of the Gram-positive bacterium Bacillus subtilis.</title>
        <authorList>
            <person name="Kunst F."/>
            <person name="Ogasawara N."/>
            <person name="Moszer I."/>
            <person name="Albertini A.M."/>
            <person name="Alloni G."/>
            <person name="Azevedo V."/>
            <person name="Bertero M.G."/>
            <person name="Bessieres P."/>
            <person name="Bolotin A."/>
            <person name="Borchert S."/>
            <person name="Borriss R."/>
            <person name="Boursier L."/>
            <person name="Brans A."/>
            <person name="Braun M."/>
            <person name="Brignell S.C."/>
            <person name="Bron S."/>
            <person name="Brouillet S."/>
            <person name="Bruschi C.V."/>
            <person name="Caldwell B."/>
            <person name="Capuano V."/>
            <person name="Carter N.M."/>
            <person name="Choi S.-K."/>
            <person name="Codani J.-J."/>
            <person name="Connerton I.F."/>
            <person name="Cummings N.J."/>
            <person name="Daniel R.A."/>
            <person name="Denizot F."/>
            <person name="Devine K.M."/>
            <person name="Duesterhoeft A."/>
            <person name="Ehrlich S.D."/>
            <person name="Emmerson P.T."/>
            <person name="Entian K.-D."/>
            <person name="Errington J."/>
            <person name="Fabret C."/>
            <person name="Ferrari E."/>
            <person name="Foulger D."/>
            <person name="Fritz C."/>
            <person name="Fujita M."/>
            <person name="Fujita Y."/>
            <person name="Fuma S."/>
            <person name="Galizzi A."/>
            <person name="Galleron N."/>
            <person name="Ghim S.-Y."/>
            <person name="Glaser P."/>
            <person name="Goffeau A."/>
            <person name="Golightly E.J."/>
            <person name="Grandi G."/>
            <person name="Guiseppi G."/>
            <person name="Guy B.J."/>
            <person name="Haga K."/>
            <person name="Haiech J."/>
            <person name="Harwood C.R."/>
            <person name="Henaut A."/>
            <person name="Hilbert H."/>
            <person name="Holsappel S."/>
            <person name="Hosono S."/>
            <person name="Hullo M.-F."/>
            <person name="Itaya M."/>
            <person name="Jones L.-M."/>
            <person name="Joris B."/>
            <person name="Karamata D."/>
            <person name="Kasahara Y."/>
            <person name="Klaerr-Blanchard M."/>
            <person name="Klein C."/>
            <person name="Kobayashi Y."/>
            <person name="Koetter P."/>
            <person name="Koningstein G."/>
            <person name="Krogh S."/>
            <person name="Kumano M."/>
            <person name="Kurita K."/>
            <person name="Lapidus A."/>
            <person name="Lardinois S."/>
            <person name="Lauber J."/>
            <person name="Lazarevic V."/>
            <person name="Lee S.-M."/>
            <person name="Levine A."/>
            <person name="Liu H."/>
            <person name="Masuda S."/>
            <person name="Mauel C."/>
            <person name="Medigue C."/>
            <person name="Medina N."/>
            <person name="Mellado R.P."/>
            <person name="Mizuno M."/>
            <person name="Moestl D."/>
            <person name="Nakai S."/>
            <person name="Noback M."/>
            <person name="Noone D."/>
            <person name="O'Reilly M."/>
            <person name="Ogawa K."/>
            <person name="Ogiwara A."/>
            <person name="Oudega B."/>
            <person name="Park S.-H."/>
            <person name="Parro V."/>
            <person name="Pohl T.M."/>
            <person name="Portetelle D."/>
            <person name="Porwollik S."/>
            <person name="Prescott A.M."/>
            <person name="Presecan E."/>
            <person name="Pujic P."/>
            <person name="Purnelle B."/>
            <person name="Rapoport G."/>
            <person name="Rey M."/>
            <person name="Reynolds S."/>
            <person name="Rieger M."/>
            <person name="Rivolta C."/>
            <person name="Rocha E."/>
            <person name="Roche B."/>
            <person name="Rose M."/>
            <person name="Sadaie Y."/>
            <person name="Sato T."/>
            <person name="Scanlan E."/>
            <person name="Schleich S."/>
            <person name="Schroeter R."/>
            <person name="Scoffone F."/>
            <person name="Sekiguchi J."/>
            <person name="Sekowska A."/>
            <person name="Seror S.J."/>
            <person name="Serror P."/>
            <person name="Shin B.-S."/>
            <person name="Soldo B."/>
            <person name="Sorokin A."/>
            <person name="Tacconi E."/>
            <person name="Takagi T."/>
            <person name="Takahashi H."/>
            <person name="Takemaru K."/>
            <person name="Takeuchi M."/>
            <person name="Tamakoshi A."/>
            <person name="Tanaka T."/>
            <person name="Terpstra P."/>
            <person name="Tognoni A."/>
            <person name="Tosato V."/>
            <person name="Uchiyama S."/>
            <person name="Vandenbol M."/>
            <person name="Vannier F."/>
            <person name="Vassarotti A."/>
            <person name="Viari A."/>
            <person name="Wambutt R."/>
            <person name="Wedler E."/>
            <person name="Wedler H."/>
            <person name="Weitzenegger T."/>
            <person name="Winters P."/>
            <person name="Wipat A."/>
            <person name="Yamamoto H."/>
            <person name="Yamane K."/>
            <person name="Yasumoto K."/>
            <person name="Yata K."/>
            <person name="Yoshida K."/>
            <person name="Yoshikawa H.-F."/>
            <person name="Zumstein E."/>
            <person name="Yoshikawa H."/>
            <person name="Danchin A."/>
        </authorList>
    </citation>
    <scope>NUCLEOTIDE SEQUENCE [LARGE SCALE GENOMIC DNA]</scope>
    <source>
        <strain>168</strain>
    </source>
</reference>
<feature type="chain" id="PRO_0000059229" description="Putative teichuronic acid biosynthesis glycosyltransferase TuaG">
    <location>
        <begin position="1"/>
        <end position="252"/>
    </location>
</feature>
<dbReference type="EC" id="2.4.-.-"/>
<dbReference type="EMBL" id="AF015609">
    <property type="protein sequence ID" value="AAB94868.1"/>
    <property type="molecule type" value="Genomic_DNA"/>
</dbReference>
<dbReference type="EMBL" id="AL009126">
    <property type="protein sequence ID" value="CAB15572.1"/>
    <property type="molecule type" value="Genomic_DNA"/>
</dbReference>
<dbReference type="PIR" id="A69728">
    <property type="entry name" value="A69728"/>
</dbReference>
<dbReference type="RefSeq" id="NP_391435.1">
    <property type="nucleotide sequence ID" value="NC_000964.3"/>
</dbReference>
<dbReference type="RefSeq" id="WP_003242619.1">
    <property type="nucleotide sequence ID" value="NZ_OZ025638.1"/>
</dbReference>
<dbReference type="SMR" id="O32268"/>
<dbReference type="FunCoup" id="O32268">
    <property type="interactions" value="6"/>
</dbReference>
<dbReference type="STRING" id="224308.BSU35550"/>
<dbReference type="CAZy" id="GT2">
    <property type="family name" value="Glycosyltransferase Family 2"/>
</dbReference>
<dbReference type="PaxDb" id="224308-BSU35550"/>
<dbReference type="DNASU" id="937965"/>
<dbReference type="EnsemblBacteria" id="CAB15572">
    <property type="protein sequence ID" value="CAB15572"/>
    <property type="gene ID" value="BSU_35550"/>
</dbReference>
<dbReference type="GeneID" id="937965"/>
<dbReference type="KEGG" id="bsu:BSU35550"/>
<dbReference type="PATRIC" id="fig|224308.179.peg.3846"/>
<dbReference type="eggNOG" id="COG1215">
    <property type="taxonomic scope" value="Bacteria"/>
</dbReference>
<dbReference type="InParanoid" id="O32268"/>
<dbReference type="OrthoDB" id="9785185at2"/>
<dbReference type="PhylomeDB" id="O32268"/>
<dbReference type="BioCyc" id="BSUB:BSU35550-MONOMER"/>
<dbReference type="BioCyc" id="MetaCyc:BSU35550-MONOMER"/>
<dbReference type="UniPathway" id="UPA00844"/>
<dbReference type="Proteomes" id="UP000001570">
    <property type="component" value="Chromosome"/>
</dbReference>
<dbReference type="GO" id="GO:0016757">
    <property type="term" value="F:glycosyltransferase activity"/>
    <property type="evidence" value="ECO:0000318"/>
    <property type="project" value="GO_Central"/>
</dbReference>
<dbReference type="GO" id="GO:0016758">
    <property type="term" value="F:hexosyltransferase activity"/>
    <property type="evidence" value="ECO:0007669"/>
    <property type="project" value="UniProtKB-ARBA"/>
</dbReference>
<dbReference type="GO" id="GO:0071555">
    <property type="term" value="P:cell wall organization"/>
    <property type="evidence" value="ECO:0007669"/>
    <property type="project" value="UniProtKB-KW"/>
</dbReference>
<dbReference type="GO" id="GO:0050845">
    <property type="term" value="P:teichuronic acid biosynthetic process"/>
    <property type="evidence" value="ECO:0007669"/>
    <property type="project" value="UniProtKB-UniPathway"/>
</dbReference>
<dbReference type="CDD" id="cd00761">
    <property type="entry name" value="Glyco_tranf_GTA_type"/>
    <property type="match status" value="1"/>
</dbReference>
<dbReference type="FunFam" id="3.90.550.10:FF:000130">
    <property type="entry name" value="Family 2 glycosyl transferase"/>
    <property type="match status" value="1"/>
</dbReference>
<dbReference type="Gene3D" id="3.90.550.10">
    <property type="entry name" value="Spore Coat Polysaccharide Biosynthesis Protein SpsA, Chain A"/>
    <property type="match status" value="1"/>
</dbReference>
<dbReference type="InterPro" id="IPR001173">
    <property type="entry name" value="Glyco_trans_2-like"/>
</dbReference>
<dbReference type="InterPro" id="IPR029044">
    <property type="entry name" value="Nucleotide-diphossugar_trans"/>
</dbReference>
<dbReference type="NCBIfam" id="NF047683">
    <property type="entry name" value="TeichurnBiosyTuaG"/>
    <property type="match status" value="1"/>
</dbReference>
<dbReference type="PANTHER" id="PTHR22916">
    <property type="entry name" value="GLYCOSYLTRANSFERASE"/>
    <property type="match status" value="1"/>
</dbReference>
<dbReference type="PANTHER" id="PTHR22916:SF3">
    <property type="entry name" value="UDP-GLCNAC:BETAGAL BETA-1,3-N-ACETYLGLUCOSAMINYLTRANSFERASE-LIKE PROTEIN 1"/>
    <property type="match status" value="1"/>
</dbReference>
<dbReference type="Pfam" id="PF00535">
    <property type="entry name" value="Glycos_transf_2"/>
    <property type="match status" value="1"/>
</dbReference>
<dbReference type="SUPFAM" id="SSF53448">
    <property type="entry name" value="Nucleotide-diphospho-sugar transferases"/>
    <property type="match status" value="1"/>
</dbReference>
<proteinExistence type="evidence at transcript level"/>
<gene>
    <name type="primary">tuaG</name>
    <name type="synonym">yvhG</name>
    <name type="ordered locus">BSU35550</name>
</gene>